<protein>
    <recommendedName>
        <fullName evidence="3">Large envelope protein</fullName>
    </recommendedName>
    <alternativeName>
        <fullName evidence="3">L glycoprotein</fullName>
    </alternativeName>
    <alternativeName>
        <fullName evidence="3">L-HBsAg</fullName>
        <shortName evidence="3">LHB</shortName>
    </alternativeName>
    <alternativeName>
        <fullName evidence="3">Large S protein</fullName>
    </alternativeName>
    <alternativeName>
        <fullName evidence="3">Large surface protein</fullName>
    </alternativeName>
    <alternativeName>
        <fullName evidence="3">Major surface antigen</fullName>
    </alternativeName>
</protein>
<proteinExistence type="evidence at protein level"/>
<comment type="function">
    <text evidence="3">The large envelope protein exists in two topological conformations, one which is termed 'external' or Le-HBsAg and the other 'internal' or Li-HBsAg. In its external conformation the protein attaches the virus to cell receptors and thereby initiating infection. This interaction determines the species specificity and liver tropism. This attachment induces virion internalization predominantly through caveolin-mediated endocytosis. The large envelope protein also assures fusion between virion membrane and endosomal membrane. In its internal conformation the protein plays a role in virion morphogenesis and mediates the contact with the nucleocapsid like a matrix protein.</text>
</comment>
<comment type="function">
    <text evidence="3">The middle envelope protein plays an important role in the budding of the virion. It is involved in the induction of budding in a nucleocapsid independent way. In this process the majority of envelope proteins bud to form subviral lipoprotein particles of 22 nm of diameter that do not contain a nucleocapsid.</text>
</comment>
<comment type="subunit">
    <molecule>Isoform L</molecule>
    <text evidence="2">In its internal form (Li-HBsAg), interacts with the capsid protein and with the isoform S. Interacts with host chaperone CANX.</text>
</comment>
<comment type="subunit">
    <molecule>Isoform M</molecule>
    <text evidence="2">Associates with host chaperone CANX through its pre-S2 N glycan; this association may be essential for isoform M proper secretion.</text>
</comment>
<comment type="subunit">
    <molecule>Isoform S</molecule>
    <text evidence="2">Interacts with isoform L. Interacts with the antigens of satellite virus HDV (HDVAgs); this interaction is required for encapsidation of HDV genomic RNA.</text>
</comment>
<comment type="subcellular location">
    <subcellularLocation>
        <location evidence="3">Virion membrane</location>
    </subcellularLocation>
</comment>
<comment type="alternative products">
    <event type="alternative splicing"/>
    <event type="alternative initiation"/>
    <isoform>
        <id>Q913A6-1</id>
        <name>L</name>
        <name>Large envelope protein</name>
        <name>LHB</name>
        <name>L-HBsAg</name>
        <sequence type="displayed"/>
    </isoform>
    <isoform>
        <id>Q913A6-2</id>
        <name>M</name>
        <name>Middle envelope protein</name>
        <name>MHB</name>
        <name>M-HBsAg</name>
        <sequence type="described" ref="VSP_031395"/>
    </isoform>
    <isoform>
        <id>Q913A6-3</id>
        <name>S</name>
        <name>Small envelope protein</name>
        <name>SHB</name>
        <name>S-HBsAg</name>
        <sequence type="described" ref="VSP_031394"/>
    </isoform>
</comment>
<comment type="domain">
    <text evidence="3">The large envelope protein is synthesized with the pre-S region at the cytosolic side of the endoplasmic reticulum and, hence will be within the virion after budding. Therefore the pre-S region is not N-glycosylated. Later a post-translational translocation of N-terminal pre-S and TM1 domains occur in about 50% of proteins at the virion surface. These molecules change their topology by an unknown mechanism, resulting in exposure of pre-S region at virion surface. For isoform M in contrast, the pre-S2 region is translocated cotranslationally to the endoplasmic reticulum lumen and is N-glycosylated.</text>
</comment>
<comment type="PTM">
    <text evidence="1 3">Isoform M is N-terminally acetylated by host at a ratio of 90%, and N-glycosylated by host at the pre-S2 region.</text>
</comment>
<comment type="PTM">
    <text evidence="3">Myristoylated.</text>
</comment>
<comment type="biotechnology">
    <text>Systematic vaccination of individuals at risk of exposure to the virus has been the main method of controlling the morbidity and mortality associated with hepatitis B. The first hepatitis B vaccine was manufactured by the purification and inactivation of HBsAg obtained from the plasma of chronic hepatitis B virus carriers. The vaccine is now produced by recombinant DNA techniques and expression of the S isoform in yeast cells. The pre-S region do not seem to induce strong enough antigenic response.</text>
</comment>
<comment type="similarity">
    <text evidence="3">Belongs to the orthohepadnavirus major surface antigen family.</text>
</comment>
<accession>Q913A6</accession>
<organismHost>
    <name type="scientific">Homo sapiens</name>
    <name type="common">Human</name>
    <dbReference type="NCBI Taxonomy" id="9606"/>
</organismHost>
<organismHost>
    <name type="scientific">Pan troglodytes</name>
    <name type="common">Chimpanzee</name>
    <dbReference type="NCBI Taxonomy" id="9598"/>
</organismHost>
<name>HBSAG_HBVC7</name>
<organism>
    <name type="scientific">Hepatitis B virus genotype C subtype ayw (isolate China/Tibet127/2002)</name>
    <name type="common">HBV-C</name>
    <dbReference type="NCBI Taxonomy" id="489469"/>
    <lineage>
        <taxon>Viruses</taxon>
        <taxon>Riboviria</taxon>
        <taxon>Pararnavirae</taxon>
        <taxon>Artverviricota</taxon>
        <taxon>Revtraviricetes</taxon>
        <taxon>Blubervirales</taxon>
        <taxon>Hepadnaviridae</taxon>
        <taxon>Orthohepadnavirus</taxon>
        <taxon>Hepatitis B virus</taxon>
        <taxon>hepatitis B virus genotype C</taxon>
    </lineage>
</organism>
<keyword id="KW-0002">3D-structure</keyword>
<keyword id="KW-0007">Acetylation</keyword>
<keyword id="KW-0024">Alternative initiation</keyword>
<keyword id="KW-0025">Alternative splicing</keyword>
<keyword id="KW-1166">Caveolin-mediated endocytosis of virus by host</keyword>
<keyword id="KW-1170">Fusion of virus membrane with host endosomal membrane</keyword>
<keyword id="KW-1168">Fusion of virus membrane with host membrane</keyword>
<keyword id="KW-0325">Glycoprotein</keyword>
<keyword id="KW-0945">Host-virus interaction</keyword>
<keyword id="KW-0449">Lipoprotein</keyword>
<keyword id="KW-0472">Membrane</keyword>
<keyword id="KW-0519">Myristate</keyword>
<keyword id="KW-0812">Transmembrane</keyword>
<keyword id="KW-1133">Transmembrane helix</keyword>
<keyword id="KW-1161">Viral attachment to host cell</keyword>
<keyword id="KW-0261">Viral envelope protein</keyword>
<keyword id="KW-1162">Viral penetration into host cytoplasm</keyword>
<keyword id="KW-0946">Virion</keyword>
<keyword id="KW-1164">Virus endocytosis by host</keyword>
<keyword id="KW-1160">Virus entry into host cell</keyword>
<dbReference type="EMBL" id="AY057948">
    <property type="protein sequence ID" value="AAL25952.1"/>
    <property type="molecule type" value="Genomic_DNA"/>
</dbReference>
<dbReference type="PIR" id="JQ1572">
    <property type="entry name" value="JQ1572"/>
</dbReference>
<dbReference type="PIR" id="JQ2063">
    <property type="entry name" value="JQ2063"/>
</dbReference>
<dbReference type="PIR" id="JQ2066">
    <property type="entry name" value="JQ2066"/>
</dbReference>
<dbReference type="PIR" id="JQ2067">
    <property type="entry name" value="JQ2067"/>
</dbReference>
<dbReference type="PIR" id="JQ2068">
    <property type="entry name" value="JQ2068"/>
</dbReference>
<dbReference type="PIR" id="JQ2069">
    <property type="entry name" value="JQ2069"/>
</dbReference>
<dbReference type="PIR" id="JQ2070">
    <property type="entry name" value="JQ2070"/>
</dbReference>
<dbReference type="PIR" id="JQ2072">
    <property type="entry name" value="JQ2072"/>
</dbReference>
<dbReference type="PIR" id="JQ2076">
    <property type="entry name" value="JQ2076"/>
</dbReference>
<dbReference type="PIR" id="JQ2077">
    <property type="entry name" value="JQ2077"/>
</dbReference>
<dbReference type="PIR" id="JQ2079">
    <property type="entry name" value="JQ2079"/>
</dbReference>
<dbReference type="PIR" id="JQ2081">
    <property type="entry name" value="JQ2081"/>
</dbReference>
<dbReference type="PIR" id="JQ2083">
    <property type="entry name" value="JQ2083"/>
</dbReference>
<dbReference type="PIR" id="JQ2091">
    <property type="entry name" value="JQ2091"/>
</dbReference>
<dbReference type="PDB" id="8YMJ">
    <property type="method" value="EM"/>
    <property type="resolution" value="6.60 A"/>
    <property type="chains" value="0/1/2/3/4/5/6/7/8/9/A/AA/AB/AC/AD/AE/AF/AG/AH/AI/AJ/AK/AL/AM/AN/AO/AP/AQ/AR/B=175-400"/>
</dbReference>
<dbReference type="PDB" id="8YMK">
    <property type="method" value="EM"/>
    <property type="resolution" value="3.70 A"/>
    <property type="chains" value="A/B=175-400"/>
</dbReference>
<dbReference type="PDBsum" id="8YMJ"/>
<dbReference type="PDBsum" id="8YMK"/>
<dbReference type="EMDB" id="EMD-39395"/>
<dbReference type="EMDB" id="EMD-39396"/>
<dbReference type="EMDB" id="EMD-39397"/>
<dbReference type="EMDB" id="EMD-39404"/>
<dbReference type="EMDB" id="EMD-60451"/>
<dbReference type="SMR" id="Q913A6"/>
<dbReference type="GlyCosmos" id="Q913A6">
    <property type="glycosylation" value="2 sites, No reported glycans"/>
</dbReference>
<dbReference type="Proteomes" id="UP000007925">
    <property type="component" value="Genome"/>
</dbReference>
<dbReference type="GO" id="GO:0016020">
    <property type="term" value="C:membrane"/>
    <property type="evidence" value="ECO:0007669"/>
    <property type="project" value="UniProtKB-UniRule"/>
</dbReference>
<dbReference type="GO" id="GO:0019031">
    <property type="term" value="C:viral envelope"/>
    <property type="evidence" value="ECO:0007669"/>
    <property type="project" value="UniProtKB-KW"/>
</dbReference>
<dbReference type="GO" id="GO:0055036">
    <property type="term" value="C:virion membrane"/>
    <property type="evidence" value="ECO:0007669"/>
    <property type="project" value="UniProtKB-SubCell"/>
</dbReference>
<dbReference type="GO" id="GO:0075513">
    <property type="term" value="P:caveolin-mediated endocytosis of virus by host cell"/>
    <property type="evidence" value="ECO:0007669"/>
    <property type="project" value="UniProtKB-KW"/>
</dbReference>
<dbReference type="GO" id="GO:0039654">
    <property type="term" value="P:fusion of virus membrane with host endosome membrane"/>
    <property type="evidence" value="ECO:0007669"/>
    <property type="project" value="UniProtKB-KW"/>
</dbReference>
<dbReference type="GO" id="GO:0019062">
    <property type="term" value="P:virion attachment to host cell"/>
    <property type="evidence" value="ECO:0007669"/>
    <property type="project" value="UniProtKB-UniRule"/>
</dbReference>
<dbReference type="HAMAP" id="MF_04075">
    <property type="entry name" value="HBV_HBSAG"/>
    <property type="match status" value="1"/>
</dbReference>
<dbReference type="InterPro" id="IPR000349">
    <property type="entry name" value="HBV_HBSAG"/>
</dbReference>
<dbReference type="Pfam" id="PF00695">
    <property type="entry name" value="vMSA"/>
    <property type="match status" value="1"/>
</dbReference>
<evidence type="ECO:0000250" key="1">
    <source>
        <dbReference type="UniProtKB" id="P03138"/>
    </source>
</evidence>
<evidence type="ECO:0000250" key="2">
    <source>
        <dbReference type="UniProtKB" id="P03141"/>
    </source>
</evidence>
<evidence type="ECO:0000255" key="3">
    <source>
        <dbReference type="HAMAP-Rule" id="MF_04075"/>
    </source>
</evidence>
<evidence type="ECO:0000256" key="4">
    <source>
        <dbReference type="SAM" id="MobiDB-lite"/>
    </source>
</evidence>
<evidence type="ECO:0000305" key="5"/>
<sequence length="400" mass="43890">MGGWSSKPRQGMGTNLSVPNPLGFFPDHHLDPAFGANSNNPDWDFNPNKDHWPKANQVRAGAFGPGFTPPHCSLLGWSPQAQGILTTVPAAPPPASSNRQSGKQPTPISPPLRDSHPQAMQWNSTTFHQTLQDPRVRGLYFPAGGSSSGTVNPVPTTASPISSIFSRIGDPALNMENITSGFLGPLLVLQAGFFLLTRILTIPQSLDSWWTSLNFLGGTTVCLGQNSQSPISNHSPTSCPPTCPGYRWMCLRRFIIFLFILLLCLIFLLVLLDYQGMLPVCPLIPGSSTTSTGPCRTCTTPAQGTSMYPSCCCTKPSDGNCTCIPIPSSWAFGKFLWEWASARFSWLSLLVPFVQWFVGLSPTVWLSVIWMMWYWGPSLYSILSPFLPLLPIFFCLWVYI</sequence>
<gene>
    <name evidence="3" type="primary">S</name>
</gene>
<feature type="initiator methionine" description="Removed; by host" evidence="3">
    <location>
        <position position="1"/>
    </location>
</feature>
<feature type="chain" id="PRO_0000319082" description="Large envelope protein" evidence="3">
    <location>
        <begin position="2"/>
        <end position="400"/>
    </location>
</feature>
<feature type="topological domain" description="Intravirion; in internal conformation" evidence="3">
    <location>
        <begin position="2"/>
        <end position="253"/>
    </location>
</feature>
<feature type="topological domain" description="Virion surface; in external conformation" evidence="3">
    <location>
        <begin position="2"/>
        <end position="181"/>
    </location>
</feature>
<feature type="transmembrane region" description="Helical; Name=TM1; Note=In external conformation" evidence="3">
    <location>
        <begin position="182"/>
        <end position="202"/>
    </location>
</feature>
<feature type="topological domain" description="Intravirion; in external conformation" evidence="3">
    <location>
        <begin position="203"/>
        <end position="253"/>
    </location>
</feature>
<feature type="transmembrane region" description="Helical; Name=TM2" evidence="3">
    <location>
        <begin position="254"/>
        <end position="274"/>
    </location>
</feature>
<feature type="topological domain" description="Virion surface" evidence="3">
    <location>
        <begin position="275"/>
        <end position="348"/>
    </location>
</feature>
<feature type="transmembrane region" description="Helical" evidence="3">
    <location>
        <begin position="349"/>
        <end position="369"/>
    </location>
</feature>
<feature type="topological domain" description="Intravirion" evidence="3">
    <location>
        <begin position="370"/>
        <end position="375"/>
    </location>
</feature>
<feature type="transmembrane region" description="Helical; Name=TM3" evidence="3">
    <location>
        <begin position="376"/>
        <end position="398"/>
    </location>
</feature>
<feature type="topological domain" description="Virion surface" evidence="3">
    <location>
        <begin position="399"/>
        <end position="400"/>
    </location>
</feature>
<feature type="region of interest" description="Pre-S" evidence="3">
    <location>
        <begin position="2"/>
        <end position="174"/>
    </location>
</feature>
<feature type="region of interest" description="Pre-S1" evidence="3">
    <location>
        <begin position="2"/>
        <end position="119"/>
    </location>
</feature>
<feature type="region of interest" description="Disordered" evidence="4">
    <location>
        <begin position="85"/>
        <end position="118"/>
    </location>
</feature>
<feature type="region of interest" description="Pre-S2" evidence="3">
    <location>
        <begin position="120"/>
        <end position="174"/>
    </location>
</feature>
<feature type="compositionally biased region" description="Polar residues" evidence="4">
    <location>
        <begin position="96"/>
        <end position="106"/>
    </location>
</feature>
<feature type="lipid moiety-binding region" description="N-myristoyl glycine; by host" evidence="3">
    <location>
        <position position="2"/>
    </location>
</feature>
<feature type="glycosylation site" description="N-linked (GlcNAc...) asparagine; by host" evidence="3">
    <location>
        <position position="320"/>
    </location>
</feature>
<feature type="splice variant" id="VSP_031394" description="In isoform S." evidence="5">
    <location>
        <begin position="1"/>
        <end position="174"/>
    </location>
</feature>
<feature type="splice variant" id="VSP_031395" description="In isoform M." evidence="5">
    <location>
        <begin position="1"/>
        <end position="119"/>
    </location>
</feature>
<feature type="modified residue" description="N-acetylmethionine" evidence="5">
    <location sequence="Q913A6-2">
        <position position="1"/>
    </location>
</feature>
<feature type="glycosylation site" description="N-linked (GlcNAc...) asparagine" evidence="5">
    <location sequence="Q913A6-2">
        <position position="4"/>
    </location>
</feature>
<reference key="1">
    <citation type="journal article" date="1992" name="J. Gen. Virol.">
        <title>Comparison of the amino acid sequences of nine different serotypes of hepatitis B surface antigen and genomic classification of the corresponding hepatitis B virus strains.</title>
        <authorList>
            <person name="Norder H."/>
            <person name="Hammas B."/>
            <person name="Lofdahl S."/>
            <person name="Courouce A.M."/>
            <person name="Magnius L.O."/>
        </authorList>
    </citation>
    <scope>NUCLEOTIDE SEQUENCE [GENOMIC DNA]</scope>
</reference>
<reference key="2">
    <citation type="journal article" date="1996" name="Intervirology">
        <title>Functions of the large hepatitis B virus surface protein in viral particle morphogenesis.</title>
        <authorList>
            <person name="Bruss V."/>
            <person name="Gerhardt E."/>
            <person name="Vieluf K."/>
            <person name="Wunderlich G."/>
        </authorList>
    </citation>
    <scope>REVIEW</scope>
</reference>
<reference key="3">
    <citation type="journal article" date="1998" name="Adv. Exp. Med. Biol.">
        <title>Role of glycan processing in hepatitis B virus envelope protein trafficking.</title>
        <authorList>
            <person name="Block T.M."/>
            <person name="Lu X."/>
            <person name="Mehta A."/>
            <person name="Park J."/>
            <person name="Blumberg B.S."/>
            <person name="Dwek R."/>
        </authorList>
    </citation>
    <scope>REVIEW</scope>
</reference>
<reference key="4">
    <citation type="journal article" date="2004" name="Virus Res.">
        <title>Envelopment of the hepatitis B virus nucleocapsid.</title>
        <authorList>
            <person name="Bruss V."/>
        </authorList>
    </citation>
    <scope>REVIEW</scope>
</reference>
<reference key="5">
    <citation type="journal article" date="2006" name="Cancer Sci.">
        <title>Hepatitis B virus pre-S mutants, endoplasmic reticulum stress and hepatocarcinogenesis.</title>
        <authorList>
            <person name="Wang H.C."/>
            <person name="Huang W."/>
            <person name="Lai M.D."/>
            <person name="Su I.J."/>
        </authorList>
    </citation>
    <scope>REVIEW</scope>
</reference>